<name>MURD_DESAL</name>
<organism>
    <name type="scientific">Desulfatibacillum aliphaticivorans</name>
    <dbReference type="NCBI Taxonomy" id="218208"/>
    <lineage>
        <taxon>Bacteria</taxon>
        <taxon>Pseudomonadati</taxon>
        <taxon>Thermodesulfobacteriota</taxon>
        <taxon>Desulfobacteria</taxon>
        <taxon>Desulfobacterales</taxon>
        <taxon>Desulfatibacillaceae</taxon>
        <taxon>Desulfatibacillum</taxon>
    </lineage>
</organism>
<protein>
    <recommendedName>
        <fullName evidence="1">UDP-N-acetylmuramoylalanine--D-glutamate ligase</fullName>
        <ecNumber evidence="1">6.3.2.9</ecNumber>
    </recommendedName>
    <alternativeName>
        <fullName evidence="1">D-glutamic acid-adding enzyme</fullName>
    </alternativeName>
    <alternativeName>
        <fullName evidence="1">UDP-N-acetylmuramoyl-L-alanyl-D-glutamate synthetase</fullName>
    </alternativeName>
</protein>
<dbReference type="EC" id="6.3.2.9" evidence="1"/>
<dbReference type="EMBL" id="CP001322">
    <property type="protein sequence ID" value="ACL04823.1"/>
    <property type="molecule type" value="Genomic_DNA"/>
</dbReference>
<dbReference type="RefSeq" id="WP_015947883.1">
    <property type="nucleotide sequence ID" value="NC_011768.1"/>
</dbReference>
<dbReference type="SMR" id="B8FBS0"/>
<dbReference type="KEGG" id="dal:Dalk_3133"/>
<dbReference type="eggNOG" id="COG0771">
    <property type="taxonomic scope" value="Bacteria"/>
</dbReference>
<dbReference type="HOGENOM" id="CLU_032540_0_0_7"/>
<dbReference type="UniPathway" id="UPA00219"/>
<dbReference type="Proteomes" id="UP000000739">
    <property type="component" value="Chromosome"/>
</dbReference>
<dbReference type="GO" id="GO:0005737">
    <property type="term" value="C:cytoplasm"/>
    <property type="evidence" value="ECO:0007669"/>
    <property type="project" value="UniProtKB-SubCell"/>
</dbReference>
<dbReference type="GO" id="GO:0005524">
    <property type="term" value="F:ATP binding"/>
    <property type="evidence" value="ECO:0007669"/>
    <property type="project" value="UniProtKB-UniRule"/>
</dbReference>
<dbReference type="GO" id="GO:0008764">
    <property type="term" value="F:UDP-N-acetylmuramoylalanine-D-glutamate ligase activity"/>
    <property type="evidence" value="ECO:0007669"/>
    <property type="project" value="UniProtKB-UniRule"/>
</dbReference>
<dbReference type="GO" id="GO:0051301">
    <property type="term" value="P:cell division"/>
    <property type="evidence" value="ECO:0007669"/>
    <property type="project" value="UniProtKB-KW"/>
</dbReference>
<dbReference type="GO" id="GO:0071555">
    <property type="term" value="P:cell wall organization"/>
    <property type="evidence" value="ECO:0007669"/>
    <property type="project" value="UniProtKB-KW"/>
</dbReference>
<dbReference type="GO" id="GO:0009252">
    <property type="term" value="P:peptidoglycan biosynthetic process"/>
    <property type="evidence" value="ECO:0007669"/>
    <property type="project" value="UniProtKB-UniRule"/>
</dbReference>
<dbReference type="GO" id="GO:0008360">
    <property type="term" value="P:regulation of cell shape"/>
    <property type="evidence" value="ECO:0007669"/>
    <property type="project" value="UniProtKB-KW"/>
</dbReference>
<dbReference type="Gene3D" id="3.90.190.20">
    <property type="entry name" value="Mur ligase, C-terminal domain"/>
    <property type="match status" value="1"/>
</dbReference>
<dbReference type="Gene3D" id="3.40.1190.10">
    <property type="entry name" value="Mur-like, catalytic domain"/>
    <property type="match status" value="1"/>
</dbReference>
<dbReference type="Gene3D" id="3.40.50.720">
    <property type="entry name" value="NAD(P)-binding Rossmann-like Domain"/>
    <property type="match status" value="1"/>
</dbReference>
<dbReference type="HAMAP" id="MF_00639">
    <property type="entry name" value="MurD"/>
    <property type="match status" value="1"/>
</dbReference>
<dbReference type="InterPro" id="IPR036565">
    <property type="entry name" value="Mur-like_cat_sf"/>
</dbReference>
<dbReference type="InterPro" id="IPR004101">
    <property type="entry name" value="Mur_ligase_C"/>
</dbReference>
<dbReference type="InterPro" id="IPR036615">
    <property type="entry name" value="Mur_ligase_C_dom_sf"/>
</dbReference>
<dbReference type="InterPro" id="IPR013221">
    <property type="entry name" value="Mur_ligase_cen"/>
</dbReference>
<dbReference type="InterPro" id="IPR005762">
    <property type="entry name" value="MurD"/>
</dbReference>
<dbReference type="NCBIfam" id="TIGR01087">
    <property type="entry name" value="murD"/>
    <property type="match status" value="1"/>
</dbReference>
<dbReference type="PANTHER" id="PTHR43692">
    <property type="entry name" value="UDP-N-ACETYLMURAMOYLALANINE--D-GLUTAMATE LIGASE"/>
    <property type="match status" value="1"/>
</dbReference>
<dbReference type="PANTHER" id="PTHR43692:SF1">
    <property type="entry name" value="UDP-N-ACETYLMURAMOYLALANINE--D-GLUTAMATE LIGASE"/>
    <property type="match status" value="1"/>
</dbReference>
<dbReference type="Pfam" id="PF02875">
    <property type="entry name" value="Mur_ligase_C"/>
    <property type="match status" value="1"/>
</dbReference>
<dbReference type="Pfam" id="PF08245">
    <property type="entry name" value="Mur_ligase_M"/>
    <property type="match status" value="1"/>
</dbReference>
<dbReference type="Pfam" id="PF21799">
    <property type="entry name" value="MurD-like_N"/>
    <property type="match status" value="1"/>
</dbReference>
<dbReference type="SUPFAM" id="SSF51984">
    <property type="entry name" value="MurCD N-terminal domain"/>
    <property type="match status" value="1"/>
</dbReference>
<dbReference type="SUPFAM" id="SSF53623">
    <property type="entry name" value="MurD-like peptide ligases, catalytic domain"/>
    <property type="match status" value="1"/>
</dbReference>
<dbReference type="SUPFAM" id="SSF53244">
    <property type="entry name" value="MurD-like peptide ligases, peptide-binding domain"/>
    <property type="match status" value="1"/>
</dbReference>
<comment type="function">
    <text evidence="1">Cell wall formation. Catalyzes the addition of glutamate to the nucleotide precursor UDP-N-acetylmuramoyl-L-alanine (UMA).</text>
</comment>
<comment type="catalytic activity">
    <reaction evidence="1">
        <text>UDP-N-acetyl-alpha-D-muramoyl-L-alanine + D-glutamate + ATP = UDP-N-acetyl-alpha-D-muramoyl-L-alanyl-D-glutamate + ADP + phosphate + H(+)</text>
        <dbReference type="Rhea" id="RHEA:16429"/>
        <dbReference type="ChEBI" id="CHEBI:15378"/>
        <dbReference type="ChEBI" id="CHEBI:29986"/>
        <dbReference type="ChEBI" id="CHEBI:30616"/>
        <dbReference type="ChEBI" id="CHEBI:43474"/>
        <dbReference type="ChEBI" id="CHEBI:83898"/>
        <dbReference type="ChEBI" id="CHEBI:83900"/>
        <dbReference type="ChEBI" id="CHEBI:456216"/>
        <dbReference type="EC" id="6.3.2.9"/>
    </reaction>
</comment>
<comment type="pathway">
    <text evidence="1">Cell wall biogenesis; peptidoglycan biosynthesis.</text>
</comment>
<comment type="subcellular location">
    <subcellularLocation>
        <location evidence="1">Cytoplasm</location>
    </subcellularLocation>
</comment>
<comment type="similarity">
    <text evidence="1">Belongs to the MurCDEF family.</text>
</comment>
<feature type="chain" id="PRO_1000147404" description="UDP-N-acetylmuramoylalanine--D-glutamate ligase">
    <location>
        <begin position="1"/>
        <end position="450"/>
    </location>
</feature>
<feature type="binding site" evidence="1">
    <location>
        <begin position="115"/>
        <end position="121"/>
    </location>
    <ligand>
        <name>ATP</name>
        <dbReference type="ChEBI" id="CHEBI:30616"/>
    </ligand>
</feature>
<proteinExistence type="inferred from homology"/>
<accession>B8FBS0</accession>
<gene>
    <name evidence="1" type="primary">murD</name>
    <name type="ordered locus">Dalk_3133</name>
</gene>
<keyword id="KW-0067">ATP-binding</keyword>
<keyword id="KW-0131">Cell cycle</keyword>
<keyword id="KW-0132">Cell division</keyword>
<keyword id="KW-0133">Cell shape</keyword>
<keyword id="KW-0961">Cell wall biogenesis/degradation</keyword>
<keyword id="KW-0963">Cytoplasm</keyword>
<keyword id="KW-0436">Ligase</keyword>
<keyword id="KW-0547">Nucleotide-binding</keyword>
<keyword id="KW-0573">Peptidoglycan synthesis</keyword>
<keyword id="KW-1185">Reference proteome</keyword>
<evidence type="ECO:0000255" key="1">
    <source>
        <dbReference type="HAMAP-Rule" id="MF_00639"/>
    </source>
</evidence>
<reference key="1">
    <citation type="journal article" date="2012" name="Environ. Microbiol.">
        <title>The genome sequence of Desulfatibacillum alkenivorans AK-01: a blueprint for anaerobic alkane oxidation.</title>
        <authorList>
            <person name="Callaghan A.V."/>
            <person name="Morris B.E."/>
            <person name="Pereira I.A."/>
            <person name="McInerney M.J."/>
            <person name="Austin R.N."/>
            <person name="Groves J.T."/>
            <person name="Kukor J.J."/>
            <person name="Suflita J.M."/>
            <person name="Young L.Y."/>
            <person name="Zylstra G.J."/>
            <person name="Wawrik B."/>
        </authorList>
    </citation>
    <scope>NUCLEOTIDE SEQUENCE [LARGE SCALE GENOMIC DNA]</scope>
    <source>
        <strain>AK-01</strain>
    </source>
</reference>
<sequence>MDLKGKKIVAVGLALTGEAVAAFCLDKGASVTVADIASETSLGARVQNVRDMGAQVELGPHNMETFTQADLIVISPGVPHTIPVLEAAREKGVPVIGEVELASRFIQAPIIAVTGTNGKTTVTSLIGEMMEASGISAFVGGNIGNPLVNYAKGEDKAQVVVAEISSFQLDTIESFAPKVALLTNVTEDHMDRYDGMEGYAASKARVFMNQTGADFAILNGCDKWSRAMCGGIKASQWFFTGREEAEAGIAMNAGAMDFFTGAQKHWSLSLKKMTLSGEHNKENAAAAALAAYAAGASVEGIQGAIDAFKGLPHRLEFVREVMDVKYYDDSKATNVDAVLRALEGFNAPVHLIMGGRDKGGHFRDLKDMVEQKAARLYVTGEAAGIITSALSGSVEVVQAGTIEKAVEFAKRAARPGEVVVLSPGCASFDQYKNYKERGKDFCRVVNALPA</sequence>